<proteinExistence type="inferred from homology"/>
<reference key="1">
    <citation type="submission" date="2008-05" db="EMBL/GenBank/DDBJ databases">
        <title>Complete sequence of chromosome 1 of Ralstonia pickettii 12J.</title>
        <authorList>
            <person name="Lucas S."/>
            <person name="Copeland A."/>
            <person name="Lapidus A."/>
            <person name="Glavina del Rio T."/>
            <person name="Dalin E."/>
            <person name="Tice H."/>
            <person name="Bruce D."/>
            <person name="Goodwin L."/>
            <person name="Pitluck S."/>
            <person name="Meincke L."/>
            <person name="Brettin T."/>
            <person name="Detter J.C."/>
            <person name="Han C."/>
            <person name="Kuske C.R."/>
            <person name="Schmutz J."/>
            <person name="Larimer F."/>
            <person name="Land M."/>
            <person name="Hauser L."/>
            <person name="Kyrpides N."/>
            <person name="Mikhailova N."/>
            <person name="Marsh T."/>
            <person name="Richardson P."/>
        </authorList>
    </citation>
    <scope>NUCLEOTIDE SEQUENCE [LARGE SCALE GENOMIC DNA]</scope>
    <source>
        <strain>12J</strain>
    </source>
</reference>
<name>MURC_RALPJ</name>
<gene>
    <name evidence="1" type="primary">murC</name>
    <name type="ordered locus">Rpic_3088</name>
</gene>
<accession>B2UCX6</accession>
<dbReference type="EC" id="6.3.2.8" evidence="1"/>
<dbReference type="EMBL" id="CP001068">
    <property type="protein sequence ID" value="ACD28211.1"/>
    <property type="molecule type" value="Genomic_DNA"/>
</dbReference>
<dbReference type="SMR" id="B2UCX6"/>
<dbReference type="STRING" id="402626.Rpic_3088"/>
<dbReference type="KEGG" id="rpi:Rpic_3088"/>
<dbReference type="PATRIC" id="fig|402626.5.peg.4226"/>
<dbReference type="eggNOG" id="COG0773">
    <property type="taxonomic scope" value="Bacteria"/>
</dbReference>
<dbReference type="HOGENOM" id="CLU_028104_2_2_4"/>
<dbReference type="UniPathway" id="UPA00219"/>
<dbReference type="GO" id="GO:0005737">
    <property type="term" value="C:cytoplasm"/>
    <property type="evidence" value="ECO:0007669"/>
    <property type="project" value="UniProtKB-SubCell"/>
</dbReference>
<dbReference type="GO" id="GO:0005524">
    <property type="term" value="F:ATP binding"/>
    <property type="evidence" value="ECO:0007669"/>
    <property type="project" value="UniProtKB-UniRule"/>
</dbReference>
<dbReference type="GO" id="GO:0008763">
    <property type="term" value="F:UDP-N-acetylmuramate-L-alanine ligase activity"/>
    <property type="evidence" value="ECO:0007669"/>
    <property type="project" value="UniProtKB-UniRule"/>
</dbReference>
<dbReference type="GO" id="GO:0051301">
    <property type="term" value="P:cell division"/>
    <property type="evidence" value="ECO:0007669"/>
    <property type="project" value="UniProtKB-KW"/>
</dbReference>
<dbReference type="GO" id="GO:0071555">
    <property type="term" value="P:cell wall organization"/>
    <property type="evidence" value="ECO:0007669"/>
    <property type="project" value="UniProtKB-KW"/>
</dbReference>
<dbReference type="GO" id="GO:0009252">
    <property type="term" value="P:peptidoglycan biosynthetic process"/>
    <property type="evidence" value="ECO:0007669"/>
    <property type="project" value="UniProtKB-UniRule"/>
</dbReference>
<dbReference type="GO" id="GO:0008360">
    <property type="term" value="P:regulation of cell shape"/>
    <property type="evidence" value="ECO:0007669"/>
    <property type="project" value="UniProtKB-KW"/>
</dbReference>
<dbReference type="FunFam" id="3.40.1190.10:FF:000001">
    <property type="entry name" value="UDP-N-acetylmuramate--L-alanine ligase"/>
    <property type="match status" value="1"/>
</dbReference>
<dbReference type="Gene3D" id="3.90.190.20">
    <property type="entry name" value="Mur ligase, C-terminal domain"/>
    <property type="match status" value="1"/>
</dbReference>
<dbReference type="Gene3D" id="3.40.1190.10">
    <property type="entry name" value="Mur-like, catalytic domain"/>
    <property type="match status" value="1"/>
</dbReference>
<dbReference type="Gene3D" id="3.40.50.720">
    <property type="entry name" value="NAD(P)-binding Rossmann-like Domain"/>
    <property type="match status" value="1"/>
</dbReference>
<dbReference type="HAMAP" id="MF_00046">
    <property type="entry name" value="MurC"/>
    <property type="match status" value="1"/>
</dbReference>
<dbReference type="InterPro" id="IPR036565">
    <property type="entry name" value="Mur-like_cat_sf"/>
</dbReference>
<dbReference type="InterPro" id="IPR004101">
    <property type="entry name" value="Mur_ligase_C"/>
</dbReference>
<dbReference type="InterPro" id="IPR036615">
    <property type="entry name" value="Mur_ligase_C_dom_sf"/>
</dbReference>
<dbReference type="InterPro" id="IPR013221">
    <property type="entry name" value="Mur_ligase_cen"/>
</dbReference>
<dbReference type="InterPro" id="IPR000713">
    <property type="entry name" value="Mur_ligase_N"/>
</dbReference>
<dbReference type="InterPro" id="IPR050061">
    <property type="entry name" value="MurCDEF_pg_biosynth"/>
</dbReference>
<dbReference type="InterPro" id="IPR005758">
    <property type="entry name" value="UDP-N-AcMur_Ala_ligase_MurC"/>
</dbReference>
<dbReference type="NCBIfam" id="TIGR01082">
    <property type="entry name" value="murC"/>
    <property type="match status" value="1"/>
</dbReference>
<dbReference type="PANTHER" id="PTHR43445:SF3">
    <property type="entry name" value="UDP-N-ACETYLMURAMATE--L-ALANINE LIGASE"/>
    <property type="match status" value="1"/>
</dbReference>
<dbReference type="PANTHER" id="PTHR43445">
    <property type="entry name" value="UDP-N-ACETYLMURAMATE--L-ALANINE LIGASE-RELATED"/>
    <property type="match status" value="1"/>
</dbReference>
<dbReference type="Pfam" id="PF01225">
    <property type="entry name" value="Mur_ligase"/>
    <property type="match status" value="1"/>
</dbReference>
<dbReference type="Pfam" id="PF02875">
    <property type="entry name" value="Mur_ligase_C"/>
    <property type="match status" value="1"/>
</dbReference>
<dbReference type="Pfam" id="PF08245">
    <property type="entry name" value="Mur_ligase_M"/>
    <property type="match status" value="1"/>
</dbReference>
<dbReference type="SUPFAM" id="SSF51984">
    <property type="entry name" value="MurCD N-terminal domain"/>
    <property type="match status" value="1"/>
</dbReference>
<dbReference type="SUPFAM" id="SSF53623">
    <property type="entry name" value="MurD-like peptide ligases, catalytic domain"/>
    <property type="match status" value="1"/>
</dbReference>
<dbReference type="SUPFAM" id="SSF53244">
    <property type="entry name" value="MurD-like peptide ligases, peptide-binding domain"/>
    <property type="match status" value="1"/>
</dbReference>
<protein>
    <recommendedName>
        <fullName evidence="1">UDP-N-acetylmuramate--L-alanine ligase</fullName>
        <ecNumber evidence="1">6.3.2.8</ecNumber>
    </recommendedName>
    <alternativeName>
        <fullName evidence="1">UDP-N-acetylmuramoyl-L-alanine synthetase</fullName>
    </alternativeName>
</protein>
<evidence type="ECO:0000255" key="1">
    <source>
        <dbReference type="HAMAP-Rule" id="MF_00046"/>
    </source>
</evidence>
<comment type="function">
    <text evidence="1">Cell wall formation.</text>
</comment>
<comment type="catalytic activity">
    <reaction evidence="1">
        <text>UDP-N-acetyl-alpha-D-muramate + L-alanine + ATP = UDP-N-acetyl-alpha-D-muramoyl-L-alanine + ADP + phosphate + H(+)</text>
        <dbReference type="Rhea" id="RHEA:23372"/>
        <dbReference type="ChEBI" id="CHEBI:15378"/>
        <dbReference type="ChEBI" id="CHEBI:30616"/>
        <dbReference type="ChEBI" id="CHEBI:43474"/>
        <dbReference type="ChEBI" id="CHEBI:57972"/>
        <dbReference type="ChEBI" id="CHEBI:70757"/>
        <dbReference type="ChEBI" id="CHEBI:83898"/>
        <dbReference type="ChEBI" id="CHEBI:456216"/>
        <dbReference type="EC" id="6.3.2.8"/>
    </reaction>
</comment>
<comment type="pathway">
    <text evidence="1">Cell wall biogenesis; peptidoglycan biosynthesis.</text>
</comment>
<comment type="subcellular location">
    <subcellularLocation>
        <location evidence="1">Cytoplasm</location>
    </subcellularLocation>
</comment>
<comment type="similarity">
    <text evidence="1">Belongs to the MurCDEF family.</text>
</comment>
<organism>
    <name type="scientific">Ralstonia pickettii (strain 12J)</name>
    <dbReference type="NCBI Taxonomy" id="402626"/>
    <lineage>
        <taxon>Bacteria</taxon>
        <taxon>Pseudomonadati</taxon>
        <taxon>Pseudomonadota</taxon>
        <taxon>Betaproteobacteria</taxon>
        <taxon>Burkholderiales</taxon>
        <taxon>Burkholderiaceae</taxon>
        <taxon>Ralstonia</taxon>
    </lineage>
</organism>
<feature type="chain" id="PRO_1000091125" description="UDP-N-acetylmuramate--L-alanine ligase">
    <location>
        <begin position="1"/>
        <end position="483"/>
    </location>
</feature>
<feature type="binding site" evidence="1">
    <location>
        <begin position="112"/>
        <end position="118"/>
    </location>
    <ligand>
        <name>ATP</name>
        <dbReference type="ChEBI" id="CHEBI:30616"/>
    </ligand>
</feature>
<sequence>MKHIVKNIHFVGIGGAGMSGIAEVLLNLGYRVTGSDLGSSATTQRLATLGATIMQGHAPEHVIGANAVVVSTAVRGDNPEVLAARAKRIPIVPRAVMLAELMRLKQGIAIAGTHGKTTTTSLVASVLAEGGLDPTFVIGGRLNSAGANARLGTGDFIVAEADESDASFLNLFPVIEVITNIDADHMDTYGHDFARLKQAFIEFTQRLPFYGIAVLCVDDPNVREILPFVSKPVVRYGFAEDAQVRAVNARAVDGRMEFTVIRQLNGHAEPPLSITLNLPGLHNVQNALAAIAIATELEVPDEAIVKALAEFNGVGRRFQRYGEVPTADGKGHFTLIDDYGHHPVEMAATLAAARGAFPDRRLVLSFQPHRFTRTRDCFEDFVKVLGTVDALLLAEVYAAGEPPIIAADGRALTRALRVANKIEPVFVEQIEDMPQAILDAAQDGDVVITMGAGSIGQVPGQVVALQAQARTANVVDLNGGAAA</sequence>
<keyword id="KW-0067">ATP-binding</keyword>
<keyword id="KW-0131">Cell cycle</keyword>
<keyword id="KW-0132">Cell division</keyword>
<keyword id="KW-0133">Cell shape</keyword>
<keyword id="KW-0961">Cell wall biogenesis/degradation</keyword>
<keyword id="KW-0963">Cytoplasm</keyword>
<keyword id="KW-0436">Ligase</keyword>
<keyword id="KW-0547">Nucleotide-binding</keyword>
<keyword id="KW-0573">Peptidoglycan synthesis</keyword>